<comment type="function">
    <text evidence="5">Probable neurotoxin.</text>
</comment>
<comment type="subcellular location">
    <subcellularLocation>
        <location evidence="3">Secreted</location>
    </subcellularLocation>
</comment>
<comment type="tissue specificity">
    <text evidence="6">Expressed by the venom duct.</text>
</comment>
<comment type="domain">
    <text evidence="5">The cysteine framework is IX (C-C-C-C-C-C).</text>
</comment>
<comment type="similarity">
    <text evidence="5">Belongs to the conotoxin M superfamily.</text>
</comment>
<proteinExistence type="evidence at protein level"/>
<feature type="signal peptide" evidence="2">
    <location>
        <begin position="1"/>
        <end position="23"/>
    </location>
</feature>
<feature type="propeptide" id="PRO_0000451003" evidence="5">
    <location>
        <begin position="24"/>
        <end position="55"/>
    </location>
</feature>
<feature type="chain" id="PRO_5007179753" description="Conotoxin Im9.1" evidence="5">
    <location>
        <begin position="56"/>
        <end position="91"/>
    </location>
</feature>
<feature type="disulfide bond" evidence="1">
    <location>
        <begin position="56"/>
        <end position="72"/>
    </location>
</feature>
<feature type="disulfide bond" evidence="1">
    <location>
        <begin position="63"/>
        <end position="83"/>
    </location>
</feature>
<feature type="disulfide bond" evidence="1">
    <location>
        <begin position="66"/>
        <end position="86"/>
    </location>
</feature>
<keyword id="KW-0165">Cleavage on pair of basic residues</keyword>
<keyword id="KW-1015">Disulfide bond</keyword>
<keyword id="KW-0528">Neurotoxin</keyword>
<keyword id="KW-0964">Secreted</keyword>
<keyword id="KW-0732">Signal</keyword>
<keyword id="KW-0800">Toxin</keyword>
<reference key="1">
    <citation type="journal article" date="2019" name="Mar. Drugs">
        <title>Transcriptomic-proteomic correlation in the predation-evoked venom of the cone snail, Conus imperialis.</title>
        <authorList>
            <person name="Jin A.H."/>
            <person name="Dutertre S."/>
            <person name="Dutt M."/>
            <person name="Lavergne V."/>
            <person name="Jones A."/>
            <person name="Lewis R.J."/>
            <person name="Alewood P.F."/>
        </authorList>
    </citation>
    <scope>NUCLEOTIDE SEQUENCE [MRNA]</scope>
    <scope>IDENTIFICATION BY MASS SPECTROMETRY</scope>
    <scope>SUBCELLULAR LOCATION</scope>
    <source>
        <tissue>Venom</tissue>
        <tissue>Venom duct</tissue>
    </source>
</reference>
<protein>
    <recommendedName>
        <fullName evidence="5">Conotoxin Im9.1</fullName>
    </recommendedName>
    <alternativeName>
        <fullName evidence="4 7">Conopeptide im015</fullName>
    </alternativeName>
</protein>
<accession>A0A125S9E9</accession>
<dbReference type="EMBL" id="KT377409">
    <property type="protein sequence ID" value="AME17673.1"/>
    <property type="molecule type" value="mRNA"/>
</dbReference>
<dbReference type="GO" id="GO:0005576">
    <property type="term" value="C:extracellular region"/>
    <property type="evidence" value="ECO:0007669"/>
    <property type="project" value="UniProtKB-SubCell"/>
</dbReference>
<dbReference type="GO" id="GO:0090729">
    <property type="term" value="F:toxin activity"/>
    <property type="evidence" value="ECO:0007669"/>
    <property type="project" value="UniProtKB-KW"/>
</dbReference>
<organism>
    <name type="scientific">Conus imperialis</name>
    <name type="common">Imperial cone</name>
    <dbReference type="NCBI Taxonomy" id="35631"/>
    <lineage>
        <taxon>Eukaryota</taxon>
        <taxon>Metazoa</taxon>
        <taxon>Spiralia</taxon>
        <taxon>Lophotrochozoa</taxon>
        <taxon>Mollusca</taxon>
        <taxon>Gastropoda</taxon>
        <taxon>Caenogastropoda</taxon>
        <taxon>Neogastropoda</taxon>
        <taxon>Conoidea</taxon>
        <taxon>Conidae</taxon>
        <taxon>Conus</taxon>
        <taxon>Stephanoconus</taxon>
    </lineage>
</organism>
<name>CM91_CONIM</name>
<sequence length="91" mass="9926">MSKVGVVPLIFLVLLSIAALQNGDDPRRQRDEKQSPQGDILRSTLTKYSYNIQRRCWAGGSPCHLCSSSQVCIAPTGHPAIMCGRCVPILT</sequence>
<evidence type="ECO:0000250" key="1">
    <source>
        <dbReference type="UniProtKB" id="Q9GU57"/>
    </source>
</evidence>
<evidence type="ECO:0000255" key="2"/>
<evidence type="ECO:0000269" key="3">
    <source>
    </source>
</evidence>
<evidence type="ECO:0000303" key="4">
    <source>
    </source>
</evidence>
<evidence type="ECO:0000305" key="5"/>
<evidence type="ECO:0000305" key="6">
    <source>
    </source>
</evidence>
<evidence type="ECO:0000312" key="7">
    <source>
        <dbReference type="EMBL" id="AME17673.1"/>
    </source>
</evidence>